<accession>A5FNH3</accession>
<gene>
    <name evidence="1" type="primary">ribH</name>
    <name type="ordered locus">Fjoh_0212</name>
</gene>
<sequence>MATENKNLSEYDKNTIPNAKDFRFGIVVSEWNDVITEGLYNGAFEALIDCDVPAQQIIRWNVPGSFELIYGAKKMLQTQNVDAVIVIGCVIQGETKHFDFVCEGVTQGIKDLNVQTDIPVIFCVLTDNNMQQSIDRSGGVHGNKGTEAAIAAIKMAYIRQQASISHPFNQPLLSSGALQIEETPIKIEKE</sequence>
<protein>
    <recommendedName>
        <fullName evidence="1">6,7-dimethyl-8-ribityllumazine synthase</fullName>
        <shortName evidence="1">DMRL synthase</shortName>
        <shortName evidence="1">LS</shortName>
        <shortName evidence="1">Lumazine synthase</shortName>
        <ecNumber evidence="1">2.5.1.78</ecNumber>
    </recommendedName>
</protein>
<organism>
    <name type="scientific">Flavobacterium johnsoniae (strain ATCC 17061 / DSM 2064 / JCM 8514 / BCRC 14874 / CCUG 350202 / NBRC 14942 / NCIMB 11054 / UW101)</name>
    <name type="common">Cytophaga johnsonae</name>
    <dbReference type="NCBI Taxonomy" id="376686"/>
    <lineage>
        <taxon>Bacteria</taxon>
        <taxon>Pseudomonadati</taxon>
        <taxon>Bacteroidota</taxon>
        <taxon>Flavobacteriia</taxon>
        <taxon>Flavobacteriales</taxon>
        <taxon>Flavobacteriaceae</taxon>
        <taxon>Flavobacterium</taxon>
    </lineage>
</organism>
<dbReference type="EC" id="2.5.1.78" evidence="1"/>
<dbReference type="EMBL" id="CP000685">
    <property type="protein sequence ID" value="ABQ03249.1"/>
    <property type="molecule type" value="Genomic_DNA"/>
</dbReference>
<dbReference type="RefSeq" id="WP_012022320.1">
    <property type="nucleotide sequence ID" value="NZ_MUGZ01000005.1"/>
</dbReference>
<dbReference type="SMR" id="A5FNH3"/>
<dbReference type="STRING" id="376686.Fjoh_0212"/>
<dbReference type="KEGG" id="fjo:Fjoh_0212"/>
<dbReference type="eggNOG" id="COG0054">
    <property type="taxonomic scope" value="Bacteria"/>
</dbReference>
<dbReference type="HOGENOM" id="CLU_089358_1_2_10"/>
<dbReference type="OrthoDB" id="9809709at2"/>
<dbReference type="UniPathway" id="UPA00275">
    <property type="reaction ID" value="UER00404"/>
</dbReference>
<dbReference type="Proteomes" id="UP000006694">
    <property type="component" value="Chromosome"/>
</dbReference>
<dbReference type="GO" id="GO:0005829">
    <property type="term" value="C:cytosol"/>
    <property type="evidence" value="ECO:0007669"/>
    <property type="project" value="TreeGrafter"/>
</dbReference>
<dbReference type="GO" id="GO:0009349">
    <property type="term" value="C:riboflavin synthase complex"/>
    <property type="evidence" value="ECO:0007669"/>
    <property type="project" value="InterPro"/>
</dbReference>
<dbReference type="GO" id="GO:0000906">
    <property type="term" value="F:6,7-dimethyl-8-ribityllumazine synthase activity"/>
    <property type="evidence" value="ECO:0007669"/>
    <property type="project" value="UniProtKB-UniRule"/>
</dbReference>
<dbReference type="GO" id="GO:0009231">
    <property type="term" value="P:riboflavin biosynthetic process"/>
    <property type="evidence" value="ECO:0007669"/>
    <property type="project" value="UniProtKB-UniRule"/>
</dbReference>
<dbReference type="CDD" id="cd09209">
    <property type="entry name" value="Lumazine_synthase-I"/>
    <property type="match status" value="1"/>
</dbReference>
<dbReference type="Gene3D" id="3.40.50.960">
    <property type="entry name" value="Lumazine/riboflavin synthase"/>
    <property type="match status" value="1"/>
</dbReference>
<dbReference type="HAMAP" id="MF_00178">
    <property type="entry name" value="Lumazine_synth"/>
    <property type="match status" value="1"/>
</dbReference>
<dbReference type="InterPro" id="IPR034964">
    <property type="entry name" value="LS"/>
</dbReference>
<dbReference type="InterPro" id="IPR002180">
    <property type="entry name" value="LS/RS"/>
</dbReference>
<dbReference type="InterPro" id="IPR036467">
    <property type="entry name" value="LS/RS_sf"/>
</dbReference>
<dbReference type="NCBIfam" id="TIGR00114">
    <property type="entry name" value="lumazine-synth"/>
    <property type="match status" value="1"/>
</dbReference>
<dbReference type="PANTHER" id="PTHR21058:SF0">
    <property type="entry name" value="6,7-DIMETHYL-8-RIBITYLLUMAZINE SYNTHASE"/>
    <property type="match status" value="1"/>
</dbReference>
<dbReference type="PANTHER" id="PTHR21058">
    <property type="entry name" value="6,7-DIMETHYL-8-RIBITYLLUMAZINE SYNTHASE DMRL SYNTHASE LUMAZINE SYNTHASE"/>
    <property type="match status" value="1"/>
</dbReference>
<dbReference type="Pfam" id="PF00885">
    <property type="entry name" value="DMRL_synthase"/>
    <property type="match status" value="1"/>
</dbReference>
<dbReference type="SUPFAM" id="SSF52121">
    <property type="entry name" value="Lumazine synthase"/>
    <property type="match status" value="1"/>
</dbReference>
<evidence type="ECO:0000255" key="1">
    <source>
        <dbReference type="HAMAP-Rule" id="MF_00178"/>
    </source>
</evidence>
<comment type="function">
    <text evidence="1">Catalyzes the formation of 6,7-dimethyl-8-ribityllumazine by condensation of 5-amino-6-(D-ribitylamino)uracil with 3,4-dihydroxy-2-butanone 4-phosphate. This is the penultimate step in the biosynthesis of riboflavin.</text>
</comment>
<comment type="catalytic activity">
    <reaction evidence="1">
        <text>(2S)-2-hydroxy-3-oxobutyl phosphate + 5-amino-6-(D-ribitylamino)uracil = 6,7-dimethyl-8-(1-D-ribityl)lumazine + phosphate + 2 H2O + H(+)</text>
        <dbReference type="Rhea" id="RHEA:26152"/>
        <dbReference type="ChEBI" id="CHEBI:15377"/>
        <dbReference type="ChEBI" id="CHEBI:15378"/>
        <dbReference type="ChEBI" id="CHEBI:15934"/>
        <dbReference type="ChEBI" id="CHEBI:43474"/>
        <dbReference type="ChEBI" id="CHEBI:58201"/>
        <dbReference type="ChEBI" id="CHEBI:58830"/>
        <dbReference type="EC" id="2.5.1.78"/>
    </reaction>
</comment>
<comment type="pathway">
    <text evidence="1">Cofactor biosynthesis; riboflavin biosynthesis; riboflavin from 2-hydroxy-3-oxobutyl phosphate and 5-amino-6-(D-ribitylamino)uracil: step 1/2.</text>
</comment>
<comment type="similarity">
    <text evidence="1">Belongs to the DMRL synthase family.</text>
</comment>
<proteinExistence type="inferred from homology"/>
<feature type="chain" id="PRO_1000077234" description="6,7-dimethyl-8-ribityllumazine synthase">
    <location>
        <begin position="1"/>
        <end position="190"/>
    </location>
</feature>
<feature type="active site" description="Proton donor" evidence="1">
    <location>
        <position position="97"/>
    </location>
</feature>
<feature type="binding site" evidence="1">
    <location>
        <position position="31"/>
    </location>
    <ligand>
        <name>5-amino-6-(D-ribitylamino)uracil</name>
        <dbReference type="ChEBI" id="CHEBI:15934"/>
    </ligand>
</feature>
<feature type="binding site" evidence="1">
    <location>
        <begin position="65"/>
        <end position="67"/>
    </location>
    <ligand>
        <name>5-amino-6-(D-ribitylamino)uracil</name>
        <dbReference type="ChEBI" id="CHEBI:15934"/>
    </ligand>
</feature>
<feature type="binding site" evidence="1">
    <location>
        <begin position="89"/>
        <end position="91"/>
    </location>
    <ligand>
        <name>5-amino-6-(D-ribitylamino)uracil</name>
        <dbReference type="ChEBI" id="CHEBI:15934"/>
    </ligand>
</feature>
<feature type="binding site" evidence="1">
    <location>
        <begin position="94"/>
        <end position="95"/>
    </location>
    <ligand>
        <name>(2S)-2-hydroxy-3-oxobutyl phosphate</name>
        <dbReference type="ChEBI" id="CHEBI:58830"/>
    </ligand>
</feature>
<feature type="binding site" evidence="1">
    <location>
        <position position="122"/>
    </location>
    <ligand>
        <name>5-amino-6-(D-ribitylamino)uracil</name>
        <dbReference type="ChEBI" id="CHEBI:15934"/>
    </ligand>
</feature>
<feature type="binding site" evidence="1">
    <location>
        <position position="136"/>
    </location>
    <ligand>
        <name>(2S)-2-hydroxy-3-oxobutyl phosphate</name>
        <dbReference type="ChEBI" id="CHEBI:58830"/>
    </ligand>
</feature>
<name>RISB_FLAJ1</name>
<keyword id="KW-0686">Riboflavin biosynthesis</keyword>
<keyword id="KW-0808">Transferase</keyword>
<reference key="1">
    <citation type="journal article" date="2009" name="Appl. Environ. Microbiol.">
        <title>Novel features of the polysaccharide-digesting gliding bacterium Flavobacterium johnsoniae as revealed by genome sequence analysis.</title>
        <authorList>
            <person name="McBride M.J."/>
            <person name="Xie G."/>
            <person name="Martens E.C."/>
            <person name="Lapidus A."/>
            <person name="Henrissat B."/>
            <person name="Rhodes R.G."/>
            <person name="Goltsman E."/>
            <person name="Wang W."/>
            <person name="Xu J."/>
            <person name="Hunnicutt D.W."/>
            <person name="Staroscik A.M."/>
            <person name="Hoover T.R."/>
            <person name="Cheng Y.Q."/>
            <person name="Stein J.L."/>
        </authorList>
    </citation>
    <scope>NUCLEOTIDE SEQUENCE [LARGE SCALE GENOMIC DNA]</scope>
    <source>
        <strain>ATCC 17061 / DSM 2064 / JCM 8514 / BCRC 14874 / CCUG 350202 / NBRC 14942 / NCIMB 11054 / UW101</strain>
    </source>
</reference>